<accession>Q6P9U3</accession>
<proteinExistence type="evidence at protein level"/>
<sequence length="195" mass="21932">MELSEYVQRGIQTLADPGSFDSSAFALLLRAAFQSLLDAQADEAALDHPDLKHIDPVVLKHCHGAAATYILEAGKHRVDKSTLSTYLEDCKFDRERIELFCTEYQNNKNSLEILLGSIGRALPHITDVSWRLEYQIKTNQLHKMCRPGYLVTLNVENADSQSYPEISFSCSMEQLQDLVGKLKDASKSLERATQL</sequence>
<gene>
    <name type="primary">Commd3</name>
</gene>
<keyword id="KW-0963">Cytoplasm</keyword>
<keyword id="KW-0406">Ion transport</keyword>
<keyword id="KW-0539">Nucleus</keyword>
<keyword id="KW-1185">Reference proteome</keyword>
<keyword id="KW-0915">Sodium</keyword>
<keyword id="KW-0739">Sodium transport</keyword>
<keyword id="KW-0804">Transcription</keyword>
<keyword id="KW-0805">Transcription regulation</keyword>
<keyword id="KW-0813">Transport</keyword>
<keyword id="KW-0833">Ubl conjugation pathway</keyword>
<protein>
    <recommendedName>
        <fullName>COMM domain-containing protein 3</fullName>
    </recommendedName>
</protein>
<comment type="function">
    <text evidence="1">Scaffold protein in the commander complex that is essential for endosomal recycling of transmembrane cargos; the commander complex is composed of the CCC subcomplex and the retriever subcomplex (By similarity). May modulate activity of cullin-RING E3 ubiquitin ligase (CRL) complexes (By similarity). May down-regulate activation of NF-kappa-B (By similarity). Modulates Na(+) transport in epithelial cells by regulation of apical cell surface expression of amiloride-sensitive sodium channel (ENaC) subunits (By similarity).</text>
</comment>
<comment type="subunit">
    <text evidence="1">Component of the commander complex consisting of the CCC subcomplex and the retriever subcomplex (By similarity). Component of the CCC (COMMD/CCDC22/CCDC93) subcomplex consisting of COMMD1, COMMD2, COMMD3, COMMD4, COMMD5, COMMD6, COMMD7, COMMD8, COMMD9, COMMD10, CCDC22 and CCDC93; within the complex forms a heterodimer with COMMD2 (By similarity). Interacts with NFKB1/p105 (By similarity). Interacts with CCDC22, CCDC93, SCNN1B, CUL3, CUL4A, CUL4B, CUL5 (By similarity).</text>
</comment>
<comment type="subcellular location">
    <subcellularLocation>
        <location evidence="3">Cytoplasm</location>
    </subcellularLocation>
    <subcellularLocation>
        <location evidence="1">Nucleus</location>
    </subcellularLocation>
</comment>
<comment type="tissue specificity">
    <text evidence="3">Expressed in kidney collecting duct cells and in the nuclei of proximal convoluted tubule cells in the kidney cortex (at protein level).</text>
</comment>
<comment type="similarity">
    <text evidence="4">Belongs to the COMM domain-containing protein 3 family.</text>
</comment>
<name>COMD3_RAT</name>
<evidence type="ECO:0000250" key="1">
    <source>
        <dbReference type="UniProtKB" id="Q9UBI1"/>
    </source>
</evidence>
<evidence type="ECO:0000255" key="2">
    <source>
        <dbReference type="PROSITE-ProRule" id="PRU00602"/>
    </source>
</evidence>
<evidence type="ECO:0000269" key="3">
    <source>
    </source>
</evidence>
<evidence type="ECO:0000305" key="4"/>
<reference key="1">
    <citation type="journal article" date="2004" name="Genome Res.">
        <title>The status, quality, and expansion of the NIH full-length cDNA project: the Mammalian Gene Collection (MGC).</title>
        <authorList>
            <consortium name="The MGC Project Team"/>
        </authorList>
    </citation>
    <scope>NUCLEOTIDE SEQUENCE [LARGE SCALE MRNA]</scope>
    <source>
        <tissue>Pituitary</tissue>
    </source>
</reference>
<reference key="2">
    <citation type="journal article" date="2013" name="Am. J. Physiol.">
        <title>Functional interaction of COMMD3 and COMMD9 with the epithelial sodium channel.</title>
        <authorList>
            <person name="Liu Y.F."/>
            <person name="Swart M."/>
            <person name="Ke Y."/>
            <person name="Ly K."/>
            <person name="McDonald F.J."/>
        </authorList>
    </citation>
    <scope>SUBCELLULAR LOCATION</scope>
    <scope>TISSUE SPECIFICITY</scope>
</reference>
<feature type="chain" id="PRO_0000077391" description="COMM domain-containing protein 3">
    <location>
        <begin position="1"/>
        <end position="195"/>
    </location>
</feature>
<feature type="domain" description="COMM" evidence="2">
    <location>
        <begin position="124"/>
        <end position="193"/>
    </location>
</feature>
<dbReference type="EMBL" id="BC060591">
    <property type="protein sequence ID" value="AAH60591.1"/>
    <property type="molecule type" value="mRNA"/>
</dbReference>
<dbReference type="RefSeq" id="NP_942027.1">
    <property type="nucleotide sequence ID" value="NM_198732.3"/>
</dbReference>
<dbReference type="SMR" id="Q6P9U3"/>
<dbReference type="FunCoup" id="Q6P9U3">
    <property type="interactions" value="942"/>
</dbReference>
<dbReference type="IntAct" id="Q6P9U3">
    <property type="interactions" value="2"/>
</dbReference>
<dbReference type="STRING" id="10116.ENSRNOP00000022201"/>
<dbReference type="iPTMnet" id="Q6P9U3"/>
<dbReference type="PhosphoSitePlus" id="Q6P9U3"/>
<dbReference type="jPOST" id="Q6P9U3"/>
<dbReference type="PaxDb" id="10116-ENSRNOP00000022201"/>
<dbReference type="Ensembl" id="ENSRNOT00000022201.6">
    <property type="protein sequence ID" value="ENSRNOP00000022201.5"/>
    <property type="gene ID" value="ENSRNOG00000016383.6"/>
</dbReference>
<dbReference type="GeneID" id="291339"/>
<dbReference type="KEGG" id="rno:291339"/>
<dbReference type="UCSC" id="RGD:735116">
    <property type="organism name" value="rat"/>
</dbReference>
<dbReference type="AGR" id="RGD:735116"/>
<dbReference type="CTD" id="23412"/>
<dbReference type="RGD" id="735116">
    <property type="gene designation" value="Commd3"/>
</dbReference>
<dbReference type="eggNOG" id="ENOG502R79J">
    <property type="taxonomic scope" value="Eukaryota"/>
</dbReference>
<dbReference type="GeneTree" id="ENSGT00390000015971"/>
<dbReference type="HOGENOM" id="CLU_118734_0_0_1"/>
<dbReference type="InParanoid" id="Q6P9U3"/>
<dbReference type="OMA" id="DWRLDYC"/>
<dbReference type="OrthoDB" id="1917519at2759"/>
<dbReference type="PhylomeDB" id="Q6P9U3"/>
<dbReference type="Reactome" id="R-RNO-6798695">
    <property type="pathway name" value="Neutrophil degranulation"/>
</dbReference>
<dbReference type="Reactome" id="R-RNO-8951664">
    <property type="pathway name" value="Neddylation"/>
</dbReference>
<dbReference type="PRO" id="PR:Q6P9U3"/>
<dbReference type="Proteomes" id="UP000002494">
    <property type="component" value="Chromosome 17"/>
</dbReference>
<dbReference type="Bgee" id="ENSRNOG00000016383">
    <property type="expression patterns" value="Expressed in cerebellum and 20 other cell types or tissues"/>
</dbReference>
<dbReference type="GO" id="GO:0005737">
    <property type="term" value="C:cytoplasm"/>
    <property type="evidence" value="ECO:0007669"/>
    <property type="project" value="UniProtKB-SubCell"/>
</dbReference>
<dbReference type="GO" id="GO:0005634">
    <property type="term" value="C:nucleus"/>
    <property type="evidence" value="ECO:0007669"/>
    <property type="project" value="UniProtKB-SubCell"/>
</dbReference>
<dbReference type="GO" id="GO:0006814">
    <property type="term" value="P:sodium ion transport"/>
    <property type="evidence" value="ECO:0007669"/>
    <property type="project" value="UniProtKB-KW"/>
</dbReference>
<dbReference type="CDD" id="cd04751">
    <property type="entry name" value="Commd3"/>
    <property type="match status" value="1"/>
</dbReference>
<dbReference type="InterPro" id="IPR017920">
    <property type="entry name" value="COMM"/>
</dbReference>
<dbReference type="InterPro" id="IPR037355">
    <property type="entry name" value="COMMD3"/>
</dbReference>
<dbReference type="PANTHER" id="PTHR31159">
    <property type="entry name" value="COMM DOMAIN-CONTAINING PROTEIN 3"/>
    <property type="match status" value="1"/>
</dbReference>
<dbReference type="PANTHER" id="PTHR31159:SF1">
    <property type="entry name" value="COMM DOMAIN-CONTAINING PROTEIN 3"/>
    <property type="match status" value="1"/>
</dbReference>
<dbReference type="Pfam" id="PF07258">
    <property type="entry name" value="COMM_domain"/>
    <property type="match status" value="1"/>
</dbReference>
<dbReference type="Pfam" id="PF21672">
    <property type="entry name" value="COMM_HN"/>
    <property type="match status" value="1"/>
</dbReference>
<dbReference type="PROSITE" id="PS51269">
    <property type="entry name" value="COMM"/>
    <property type="match status" value="1"/>
</dbReference>
<organism>
    <name type="scientific">Rattus norvegicus</name>
    <name type="common">Rat</name>
    <dbReference type="NCBI Taxonomy" id="10116"/>
    <lineage>
        <taxon>Eukaryota</taxon>
        <taxon>Metazoa</taxon>
        <taxon>Chordata</taxon>
        <taxon>Craniata</taxon>
        <taxon>Vertebrata</taxon>
        <taxon>Euteleostomi</taxon>
        <taxon>Mammalia</taxon>
        <taxon>Eutheria</taxon>
        <taxon>Euarchontoglires</taxon>
        <taxon>Glires</taxon>
        <taxon>Rodentia</taxon>
        <taxon>Myomorpha</taxon>
        <taxon>Muroidea</taxon>
        <taxon>Muridae</taxon>
        <taxon>Murinae</taxon>
        <taxon>Rattus</taxon>
    </lineage>
</organism>